<keyword id="KW-0067">ATP-binding</keyword>
<keyword id="KW-0119">Carbohydrate metabolism</keyword>
<keyword id="KW-0418">Kinase</keyword>
<keyword id="KW-0547">Nucleotide-binding</keyword>
<keyword id="KW-0808">Transferase</keyword>
<proteinExistence type="inferred from homology"/>
<organism>
    <name type="scientific">Psychrobacter cryohalolentis (strain ATCC BAA-1226 / DSM 17306 / VKM B-2378 / K5)</name>
    <dbReference type="NCBI Taxonomy" id="335284"/>
    <lineage>
        <taxon>Bacteria</taxon>
        <taxon>Pseudomonadati</taxon>
        <taxon>Pseudomonadota</taxon>
        <taxon>Gammaproteobacteria</taxon>
        <taxon>Moraxellales</taxon>
        <taxon>Moraxellaceae</taxon>
        <taxon>Psychrobacter</taxon>
    </lineage>
</organism>
<reference key="1">
    <citation type="submission" date="2006-03" db="EMBL/GenBank/DDBJ databases">
        <title>Complete sequence of chromosome of Psychrobacter cryohalolentis K5.</title>
        <authorList>
            <consortium name="US DOE Joint Genome Institute"/>
            <person name="Copeland A."/>
            <person name="Lucas S."/>
            <person name="Lapidus A."/>
            <person name="Barry K."/>
            <person name="Detter J.C."/>
            <person name="Glavina T."/>
            <person name="Hammon N."/>
            <person name="Israni S."/>
            <person name="Dalin E."/>
            <person name="Tice H."/>
            <person name="Pitluck S."/>
            <person name="Brettin T."/>
            <person name="Bruce D."/>
            <person name="Han C."/>
            <person name="Tapia R."/>
            <person name="Sims D.R."/>
            <person name="Gilna P."/>
            <person name="Schmutz J."/>
            <person name="Larimer F."/>
            <person name="Land M."/>
            <person name="Hauser L."/>
            <person name="Kyrpides N."/>
            <person name="Kim E."/>
            <person name="Richardson P."/>
        </authorList>
    </citation>
    <scope>NUCLEOTIDE SEQUENCE [LARGE SCALE GENOMIC DNA]</scope>
    <source>
        <strain>ATCC BAA-1226 / DSM 17306 / VKM B-2378 / K5</strain>
    </source>
</reference>
<gene>
    <name evidence="1" type="primary">anmK</name>
    <name type="ordered locus">Pcryo_2270</name>
</gene>
<dbReference type="EC" id="2.7.1.170" evidence="1"/>
<dbReference type="EMBL" id="CP000323">
    <property type="protein sequence ID" value="ABE76047.1"/>
    <property type="status" value="ALT_INIT"/>
    <property type="molecule type" value="Genomic_DNA"/>
</dbReference>
<dbReference type="RefSeq" id="WP_011514579.1">
    <property type="nucleotide sequence ID" value="NC_007969.1"/>
</dbReference>
<dbReference type="SMR" id="Q1Q8F6"/>
<dbReference type="STRING" id="335284.Pcryo_2270"/>
<dbReference type="KEGG" id="pcr:Pcryo_2270"/>
<dbReference type="eggNOG" id="COG2377">
    <property type="taxonomic scope" value="Bacteria"/>
</dbReference>
<dbReference type="HOGENOM" id="CLU_038782_0_0_6"/>
<dbReference type="UniPathway" id="UPA00343"/>
<dbReference type="UniPathway" id="UPA00544"/>
<dbReference type="Proteomes" id="UP000002425">
    <property type="component" value="Chromosome"/>
</dbReference>
<dbReference type="GO" id="GO:0005524">
    <property type="term" value="F:ATP binding"/>
    <property type="evidence" value="ECO:0007669"/>
    <property type="project" value="UniProtKB-UniRule"/>
</dbReference>
<dbReference type="GO" id="GO:0016301">
    <property type="term" value="F:kinase activity"/>
    <property type="evidence" value="ECO:0007669"/>
    <property type="project" value="UniProtKB-KW"/>
</dbReference>
<dbReference type="GO" id="GO:0016773">
    <property type="term" value="F:phosphotransferase activity, alcohol group as acceptor"/>
    <property type="evidence" value="ECO:0007669"/>
    <property type="project" value="UniProtKB-UniRule"/>
</dbReference>
<dbReference type="GO" id="GO:0097175">
    <property type="term" value="P:1,6-anhydro-N-acetyl-beta-muramic acid catabolic process"/>
    <property type="evidence" value="ECO:0007669"/>
    <property type="project" value="UniProtKB-UniRule"/>
</dbReference>
<dbReference type="GO" id="GO:0006040">
    <property type="term" value="P:amino sugar metabolic process"/>
    <property type="evidence" value="ECO:0007669"/>
    <property type="project" value="InterPro"/>
</dbReference>
<dbReference type="GO" id="GO:0009254">
    <property type="term" value="P:peptidoglycan turnover"/>
    <property type="evidence" value="ECO:0007669"/>
    <property type="project" value="UniProtKB-UniRule"/>
</dbReference>
<dbReference type="CDD" id="cd24050">
    <property type="entry name" value="ASKHA_NBD_ANMK"/>
    <property type="match status" value="1"/>
</dbReference>
<dbReference type="Gene3D" id="3.30.420.40">
    <property type="match status" value="2"/>
</dbReference>
<dbReference type="HAMAP" id="MF_01270">
    <property type="entry name" value="AnhMurNAc_kinase"/>
    <property type="match status" value="1"/>
</dbReference>
<dbReference type="InterPro" id="IPR005338">
    <property type="entry name" value="Anhydro_N_Ac-Mur_kinase"/>
</dbReference>
<dbReference type="InterPro" id="IPR043129">
    <property type="entry name" value="ATPase_NBD"/>
</dbReference>
<dbReference type="NCBIfam" id="NF007139">
    <property type="entry name" value="PRK09585.1-3"/>
    <property type="match status" value="1"/>
</dbReference>
<dbReference type="PANTHER" id="PTHR30605">
    <property type="entry name" value="ANHYDRO-N-ACETYLMURAMIC ACID KINASE"/>
    <property type="match status" value="1"/>
</dbReference>
<dbReference type="PANTHER" id="PTHR30605:SF0">
    <property type="entry name" value="ANHYDRO-N-ACETYLMURAMIC ACID KINASE"/>
    <property type="match status" value="1"/>
</dbReference>
<dbReference type="Pfam" id="PF03702">
    <property type="entry name" value="AnmK"/>
    <property type="match status" value="1"/>
</dbReference>
<dbReference type="SUPFAM" id="SSF53067">
    <property type="entry name" value="Actin-like ATPase domain"/>
    <property type="match status" value="1"/>
</dbReference>
<evidence type="ECO:0000255" key="1">
    <source>
        <dbReference type="HAMAP-Rule" id="MF_01270"/>
    </source>
</evidence>
<evidence type="ECO:0000305" key="2"/>
<accession>Q1Q8F6</accession>
<name>ANMK_PSYCK</name>
<protein>
    <recommendedName>
        <fullName evidence="1">Anhydro-N-acetylmuramic acid kinase</fullName>
        <ecNumber evidence="1">2.7.1.170</ecNumber>
    </recommendedName>
    <alternativeName>
        <fullName evidence="1">AnhMurNAc kinase</fullName>
    </alternativeName>
</protein>
<feature type="chain" id="PRO_0000250036" description="Anhydro-N-acetylmuramic acid kinase">
    <location>
        <begin position="1"/>
        <end position="427"/>
    </location>
</feature>
<feature type="binding site" evidence="1">
    <location>
        <begin position="32"/>
        <end position="39"/>
    </location>
    <ligand>
        <name>ATP</name>
        <dbReference type="ChEBI" id="CHEBI:30616"/>
    </ligand>
</feature>
<comment type="function">
    <text evidence="1">Catalyzes the specific phosphorylation of 1,6-anhydro-N-acetylmuramic acid (anhMurNAc) with the simultaneous cleavage of the 1,6-anhydro ring, generating MurNAc-6-P. Is required for the utilization of anhMurNAc either imported from the medium or derived from its own cell wall murein, and thus plays a role in cell wall recycling.</text>
</comment>
<comment type="catalytic activity">
    <reaction evidence="1">
        <text>1,6-anhydro-N-acetyl-beta-muramate + ATP + H2O = N-acetyl-D-muramate 6-phosphate + ADP + H(+)</text>
        <dbReference type="Rhea" id="RHEA:24952"/>
        <dbReference type="ChEBI" id="CHEBI:15377"/>
        <dbReference type="ChEBI" id="CHEBI:15378"/>
        <dbReference type="ChEBI" id="CHEBI:30616"/>
        <dbReference type="ChEBI" id="CHEBI:58690"/>
        <dbReference type="ChEBI" id="CHEBI:58722"/>
        <dbReference type="ChEBI" id="CHEBI:456216"/>
        <dbReference type="EC" id="2.7.1.170"/>
    </reaction>
</comment>
<comment type="pathway">
    <text evidence="1">Amino-sugar metabolism; 1,6-anhydro-N-acetylmuramate degradation.</text>
</comment>
<comment type="pathway">
    <text evidence="1">Cell wall biogenesis; peptidoglycan recycling.</text>
</comment>
<comment type="similarity">
    <text evidence="1">Belongs to the anhydro-N-acetylmuramic acid kinase family.</text>
</comment>
<comment type="sequence caution" evidence="2">
    <conflict type="erroneous initiation">
        <sequence resource="EMBL-CDS" id="ABE76047"/>
    </conflict>
</comment>
<sequence length="427" mass="46340">MDDLNYATLTDALEQTVFENFDDGLYIGMMSGTSLDGMDAVLCQFSEKDNTQQPMHVLATHSQDFPPRLREVLLALCQPNGIQALTPSDDEPNSELDWFGWASKEYAEFSSDVVNTLLQQSNTDSESVLAIGCHGQTVRHRPQMGFSLQLVDANIIAERTGISVVSDFRRRDMAVGGQGAPLVPAFHQALFAVPDSTRVLLNLGGIANIAVLPAISNDLVDSNEHSENQPSDSVVGYDTGPANLLLDAWTTLHTDKDYDAGGTWAQSGQVVEPLLNQLLEHPFFKKTYPKSTGREDFNLAWLQDELQKFDQASADVRYSSADVQATLTELTAISASAQINLFINASSSNAVYVCGGGALNNYLMTRLQVHLQRCKVETTASLGLEPTWVEAVAFAWLARQTLMGETGNLPAVTGASKGVVLGQVCFA</sequence>